<proteinExistence type="inferred from homology"/>
<sequence>MPSIRLADLAQQLDAQVHGDGDLVITGIASMHSAQPEQITFLSNSRYREQLASCNAGAVVLTEADLPFCKVAALVVENPYFTYARMAQIMDTTPQPAQDIAPSAVISPQATLGEGVSVGANAVIESGVVLGDNVVIGAGCFIGKNTHIGAGSRLWANVSIYHEVVIGQNCLIQSGTVIGADGFGYANDRGNWVKIPQLGSVHIGDRVEIGACTTIDRGALDNTIIGNGVIIDNQCQIAHNVVIGDNTAVAGGVIMAGSLKVGRYCMIGGASVINGHMEICDKVTITGMGMVMRPITEPGLYSSGIPLQPNKMWRKTAALVMNIDGINKRLKAVERKIDKE</sequence>
<evidence type="ECO:0000250" key="1"/>
<evidence type="ECO:0000255" key="2">
    <source>
        <dbReference type="HAMAP-Rule" id="MF_00523"/>
    </source>
</evidence>
<evidence type="ECO:0000305" key="3"/>
<organism>
    <name type="scientific">Yersinia pestis</name>
    <dbReference type="NCBI Taxonomy" id="632"/>
    <lineage>
        <taxon>Bacteria</taxon>
        <taxon>Pseudomonadati</taxon>
        <taxon>Pseudomonadota</taxon>
        <taxon>Gammaproteobacteria</taxon>
        <taxon>Enterobacterales</taxon>
        <taxon>Yersiniaceae</taxon>
        <taxon>Yersinia</taxon>
    </lineage>
</organism>
<protein>
    <recommendedName>
        <fullName evidence="2">UDP-3-O-(3-hydroxymyristoyl)glucosamine N-acyltransferase</fullName>
        <shortName evidence="2">UDP-3-O-(3-OHC14)-GlcN N-acyltransferase</shortName>
        <ecNumber evidence="2">2.3.1.191</ecNumber>
    </recommendedName>
    <alternativeName>
        <fullName evidence="2">UDP-3-O-(3-hydroxytetradecanoyl)glucosamine N-acyltransferase</fullName>
    </alternativeName>
</protein>
<feature type="initiator methionine" description="Removed" evidence="1">
    <location>
        <position position="1"/>
    </location>
</feature>
<feature type="chain" id="PRO_0000059717" description="UDP-3-O-(3-hydroxymyristoyl)glucosamine N-acyltransferase">
    <location>
        <begin position="2"/>
        <end position="340"/>
    </location>
</feature>
<feature type="active site" description="Proton acceptor" evidence="2">
    <location>
        <position position="239"/>
    </location>
</feature>
<feature type="sequence conflict" description="In Ref. 3; AAS62980." evidence="3" ref="3">
    <original>A</original>
    <variation>V</variation>
    <location>
        <position position="72"/>
    </location>
</feature>
<keyword id="KW-0012">Acyltransferase</keyword>
<keyword id="KW-0441">Lipid A biosynthesis</keyword>
<keyword id="KW-0444">Lipid biosynthesis</keyword>
<keyword id="KW-0443">Lipid metabolism</keyword>
<keyword id="KW-1185">Reference proteome</keyword>
<keyword id="KW-0677">Repeat</keyword>
<keyword id="KW-0808">Transferase</keyword>
<gene>
    <name evidence="2" type="primary">lpxD</name>
    <name type="ordered locus">YPO1054</name>
    <name type="ordered locus">y3125</name>
    <name type="ordered locus">YP_2796</name>
</gene>
<comment type="function">
    <text evidence="2">Catalyzes the N-acylation of UDP-3-O-(hydroxytetradecanoyl)glucosamine using 3-hydroxytetradecanoyl-ACP as the acyl donor. Is involved in the biosynthesis of lipid A, a phosphorylated glycolipid that anchors the lipopolysaccharide to the outer membrane of the cell.</text>
</comment>
<comment type="catalytic activity">
    <reaction evidence="2">
        <text>a UDP-3-O-[(3R)-3-hydroxyacyl]-alpha-D-glucosamine + a (3R)-hydroxyacyl-[ACP] = a UDP-2-N,3-O-bis[(3R)-3-hydroxyacyl]-alpha-D-glucosamine + holo-[ACP] + H(+)</text>
        <dbReference type="Rhea" id="RHEA:53836"/>
        <dbReference type="Rhea" id="RHEA-COMP:9685"/>
        <dbReference type="Rhea" id="RHEA-COMP:9945"/>
        <dbReference type="ChEBI" id="CHEBI:15378"/>
        <dbReference type="ChEBI" id="CHEBI:64479"/>
        <dbReference type="ChEBI" id="CHEBI:78827"/>
        <dbReference type="ChEBI" id="CHEBI:137740"/>
        <dbReference type="ChEBI" id="CHEBI:137748"/>
        <dbReference type="EC" id="2.3.1.191"/>
    </reaction>
</comment>
<comment type="catalytic activity">
    <reaction evidence="2">
        <text>UDP-3-O-[(3R)-3-hydroxytetradecanoyl]-alpha-D-glucosamine + (3R)-hydroxytetradecanoyl-[ACP] = UDP-2-N,3-O-bis[(3R)-3-hydroxytetradecanoyl]-alpha-D-glucosamine + holo-[ACP] + H(+)</text>
        <dbReference type="Rhea" id="RHEA:17817"/>
        <dbReference type="Rhea" id="RHEA-COMP:9646"/>
        <dbReference type="Rhea" id="RHEA-COMP:9685"/>
        <dbReference type="ChEBI" id="CHEBI:15378"/>
        <dbReference type="ChEBI" id="CHEBI:64479"/>
        <dbReference type="ChEBI" id="CHEBI:71573"/>
        <dbReference type="ChEBI" id="CHEBI:78474"/>
        <dbReference type="ChEBI" id="CHEBI:78847"/>
    </reaction>
</comment>
<comment type="pathway">
    <text evidence="2">Glycolipid biosynthesis; lipid IV(A) biosynthesis; lipid IV(A) from (3R)-3-hydroxytetradecanoyl-[acyl-carrier-protein] and UDP-N-acetyl-alpha-D-glucosamine: step 3/6.</text>
</comment>
<comment type="subunit">
    <text evidence="2">Homotrimer.</text>
</comment>
<comment type="similarity">
    <text evidence="2">Belongs to the transferase hexapeptide repeat family. LpxD subfamily.</text>
</comment>
<dbReference type="EC" id="2.3.1.191" evidence="2"/>
<dbReference type="EMBL" id="AL590842">
    <property type="protein sequence ID" value="CAL19719.1"/>
    <property type="molecule type" value="Genomic_DNA"/>
</dbReference>
<dbReference type="EMBL" id="AE009952">
    <property type="protein sequence ID" value="AAM86675.1"/>
    <property type="molecule type" value="Genomic_DNA"/>
</dbReference>
<dbReference type="EMBL" id="AE017042">
    <property type="protein sequence ID" value="AAS62980.1"/>
    <property type="molecule type" value="Genomic_DNA"/>
</dbReference>
<dbReference type="PIR" id="AE0129">
    <property type="entry name" value="AE0129"/>
</dbReference>
<dbReference type="RefSeq" id="WP_002212141.1">
    <property type="nucleotide sequence ID" value="NZ_WUCM01000044.1"/>
</dbReference>
<dbReference type="RefSeq" id="YP_002346097.1">
    <property type="nucleotide sequence ID" value="NC_003143.1"/>
</dbReference>
<dbReference type="SMR" id="P58611"/>
<dbReference type="STRING" id="214092.YPO1054"/>
<dbReference type="PaxDb" id="214092-YPO1054"/>
<dbReference type="DNASU" id="1148072"/>
<dbReference type="EnsemblBacteria" id="AAS62980">
    <property type="protein sequence ID" value="AAS62980"/>
    <property type="gene ID" value="YP_2796"/>
</dbReference>
<dbReference type="GeneID" id="57977507"/>
<dbReference type="KEGG" id="ype:YPO1054"/>
<dbReference type="KEGG" id="ypk:y3125"/>
<dbReference type="KEGG" id="ypm:YP_2796"/>
<dbReference type="PATRIC" id="fig|214092.21.peg.1342"/>
<dbReference type="eggNOG" id="COG1044">
    <property type="taxonomic scope" value="Bacteria"/>
</dbReference>
<dbReference type="HOGENOM" id="CLU_049865_0_1_6"/>
<dbReference type="OMA" id="PAMEIHE"/>
<dbReference type="OrthoDB" id="9784739at2"/>
<dbReference type="UniPathway" id="UPA00359">
    <property type="reaction ID" value="UER00479"/>
</dbReference>
<dbReference type="Proteomes" id="UP000000815">
    <property type="component" value="Chromosome"/>
</dbReference>
<dbReference type="Proteomes" id="UP000001019">
    <property type="component" value="Chromosome"/>
</dbReference>
<dbReference type="Proteomes" id="UP000002490">
    <property type="component" value="Chromosome"/>
</dbReference>
<dbReference type="GO" id="GO:0016020">
    <property type="term" value="C:membrane"/>
    <property type="evidence" value="ECO:0007669"/>
    <property type="project" value="GOC"/>
</dbReference>
<dbReference type="GO" id="GO:0016410">
    <property type="term" value="F:N-acyltransferase activity"/>
    <property type="evidence" value="ECO:0007669"/>
    <property type="project" value="InterPro"/>
</dbReference>
<dbReference type="GO" id="GO:0103118">
    <property type="term" value="F:UDP-3-O-(R-3-hydroxymyristoyl)-glucosamine N-acyltransferase activity"/>
    <property type="evidence" value="ECO:0007669"/>
    <property type="project" value="UniProtKB-EC"/>
</dbReference>
<dbReference type="GO" id="GO:0009245">
    <property type="term" value="P:lipid A biosynthetic process"/>
    <property type="evidence" value="ECO:0007669"/>
    <property type="project" value="UniProtKB-UniRule"/>
</dbReference>
<dbReference type="CDD" id="cd03352">
    <property type="entry name" value="LbH_LpxD"/>
    <property type="match status" value="1"/>
</dbReference>
<dbReference type="FunFam" id="2.160.10.10:FF:000005">
    <property type="entry name" value="UDP-3-O-(3-hydroxymyristoyl)glucosamine N-acyltransferase"/>
    <property type="match status" value="1"/>
</dbReference>
<dbReference type="Gene3D" id="1.20.5.170">
    <property type="match status" value="1"/>
</dbReference>
<dbReference type="Gene3D" id="2.160.10.10">
    <property type="entry name" value="Hexapeptide repeat proteins"/>
    <property type="match status" value="1"/>
</dbReference>
<dbReference type="Gene3D" id="3.40.1390.10">
    <property type="entry name" value="MurE/MurF, N-terminal domain"/>
    <property type="match status" value="1"/>
</dbReference>
<dbReference type="HAMAP" id="MF_00523">
    <property type="entry name" value="LpxD"/>
    <property type="match status" value="1"/>
</dbReference>
<dbReference type="InterPro" id="IPR001451">
    <property type="entry name" value="Hexapep"/>
</dbReference>
<dbReference type="InterPro" id="IPR018357">
    <property type="entry name" value="Hexapep_transf_CS"/>
</dbReference>
<dbReference type="InterPro" id="IPR007691">
    <property type="entry name" value="LpxD"/>
</dbReference>
<dbReference type="InterPro" id="IPR011004">
    <property type="entry name" value="Trimer_LpxA-like_sf"/>
</dbReference>
<dbReference type="InterPro" id="IPR020573">
    <property type="entry name" value="UDP_GlcNAc_AcTrfase_non-rep"/>
</dbReference>
<dbReference type="NCBIfam" id="TIGR01853">
    <property type="entry name" value="lipid_A_lpxD"/>
    <property type="match status" value="1"/>
</dbReference>
<dbReference type="NCBIfam" id="NF002060">
    <property type="entry name" value="PRK00892.1"/>
    <property type="match status" value="1"/>
</dbReference>
<dbReference type="PANTHER" id="PTHR43378">
    <property type="entry name" value="UDP-3-O-ACYLGLUCOSAMINE N-ACYLTRANSFERASE"/>
    <property type="match status" value="1"/>
</dbReference>
<dbReference type="PANTHER" id="PTHR43378:SF2">
    <property type="entry name" value="UDP-3-O-ACYLGLUCOSAMINE N-ACYLTRANSFERASE 1, MITOCHONDRIAL-RELATED"/>
    <property type="match status" value="1"/>
</dbReference>
<dbReference type="Pfam" id="PF00132">
    <property type="entry name" value="Hexapep"/>
    <property type="match status" value="3"/>
</dbReference>
<dbReference type="Pfam" id="PF04613">
    <property type="entry name" value="LpxD"/>
    <property type="match status" value="1"/>
</dbReference>
<dbReference type="SUPFAM" id="SSF51161">
    <property type="entry name" value="Trimeric LpxA-like enzymes"/>
    <property type="match status" value="1"/>
</dbReference>
<dbReference type="PROSITE" id="PS00101">
    <property type="entry name" value="HEXAPEP_TRANSFERASES"/>
    <property type="match status" value="3"/>
</dbReference>
<accession>P58611</accession>
<accession>Q0WHZ1</accession>
<reference key="1">
    <citation type="journal article" date="2001" name="Nature">
        <title>Genome sequence of Yersinia pestis, the causative agent of plague.</title>
        <authorList>
            <person name="Parkhill J."/>
            <person name="Wren B.W."/>
            <person name="Thomson N.R."/>
            <person name="Titball R.W."/>
            <person name="Holden M.T.G."/>
            <person name="Prentice M.B."/>
            <person name="Sebaihia M."/>
            <person name="James K.D."/>
            <person name="Churcher C.M."/>
            <person name="Mungall K.L."/>
            <person name="Baker S."/>
            <person name="Basham D."/>
            <person name="Bentley S.D."/>
            <person name="Brooks K."/>
            <person name="Cerdeno-Tarraga A.-M."/>
            <person name="Chillingworth T."/>
            <person name="Cronin A."/>
            <person name="Davies R.M."/>
            <person name="Davis P."/>
            <person name="Dougan G."/>
            <person name="Feltwell T."/>
            <person name="Hamlin N."/>
            <person name="Holroyd S."/>
            <person name="Jagels K."/>
            <person name="Karlyshev A.V."/>
            <person name="Leather S."/>
            <person name="Moule S."/>
            <person name="Oyston P.C.F."/>
            <person name="Quail M.A."/>
            <person name="Rutherford K.M."/>
            <person name="Simmonds M."/>
            <person name="Skelton J."/>
            <person name="Stevens K."/>
            <person name="Whitehead S."/>
            <person name="Barrell B.G."/>
        </authorList>
    </citation>
    <scope>NUCLEOTIDE SEQUENCE [LARGE SCALE GENOMIC DNA]</scope>
    <source>
        <strain>CO-92 / Biovar Orientalis</strain>
    </source>
</reference>
<reference key="2">
    <citation type="journal article" date="2002" name="J. Bacteriol.">
        <title>Genome sequence of Yersinia pestis KIM.</title>
        <authorList>
            <person name="Deng W."/>
            <person name="Burland V."/>
            <person name="Plunkett G. III"/>
            <person name="Boutin A."/>
            <person name="Mayhew G.F."/>
            <person name="Liss P."/>
            <person name="Perna N.T."/>
            <person name="Rose D.J."/>
            <person name="Mau B."/>
            <person name="Zhou S."/>
            <person name="Schwartz D.C."/>
            <person name="Fetherston J.D."/>
            <person name="Lindler L.E."/>
            <person name="Brubaker R.R."/>
            <person name="Plano G.V."/>
            <person name="Straley S.C."/>
            <person name="McDonough K.A."/>
            <person name="Nilles M.L."/>
            <person name="Matson J.S."/>
            <person name="Blattner F.R."/>
            <person name="Perry R.D."/>
        </authorList>
    </citation>
    <scope>NUCLEOTIDE SEQUENCE [LARGE SCALE GENOMIC DNA]</scope>
    <source>
        <strain>KIM10+ / Biovar Mediaevalis</strain>
    </source>
</reference>
<reference key="3">
    <citation type="journal article" date="2004" name="DNA Res.">
        <title>Complete genome sequence of Yersinia pestis strain 91001, an isolate avirulent to humans.</title>
        <authorList>
            <person name="Song Y."/>
            <person name="Tong Z."/>
            <person name="Wang J."/>
            <person name="Wang L."/>
            <person name="Guo Z."/>
            <person name="Han Y."/>
            <person name="Zhang J."/>
            <person name="Pei D."/>
            <person name="Zhou D."/>
            <person name="Qin H."/>
            <person name="Pang X."/>
            <person name="Han Y."/>
            <person name="Zhai J."/>
            <person name="Li M."/>
            <person name="Cui B."/>
            <person name="Qi Z."/>
            <person name="Jin L."/>
            <person name="Dai R."/>
            <person name="Chen F."/>
            <person name="Li S."/>
            <person name="Ye C."/>
            <person name="Du Z."/>
            <person name="Lin W."/>
            <person name="Wang J."/>
            <person name="Yu J."/>
            <person name="Yang H."/>
            <person name="Wang J."/>
            <person name="Huang P."/>
            <person name="Yang R."/>
        </authorList>
    </citation>
    <scope>NUCLEOTIDE SEQUENCE [LARGE SCALE GENOMIC DNA]</scope>
    <source>
        <strain>91001 / Biovar Mediaevalis</strain>
    </source>
</reference>
<name>LPXD_YERPE</name>